<keyword id="KW-0002">3D-structure</keyword>
<keyword id="KW-0067">ATP-binding</keyword>
<keyword id="KW-0114">cAMP</keyword>
<keyword id="KW-1003">Cell membrane</keyword>
<keyword id="KW-0963">Cytoplasm</keyword>
<keyword id="KW-0418">Kinase</keyword>
<keyword id="KW-0449">Lipoprotein</keyword>
<keyword id="KW-0472">Membrane</keyword>
<keyword id="KW-0496">Mitochondrion</keyword>
<keyword id="KW-0519">Myristate</keyword>
<keyword id="KW-0547">Nucleotide-binding</keyword>
<keyword id="KW-0539">Nucleus</keyword>
<keyword id="KW-0597">Phosphoprotein</keyword>
<keyword id="KW-0723">Serine/threonine-protein kinase</keyword>
<keyword id="KW-0808">Transferase</keyword>
<proteinExistence type="evidence at protein level"/>
<feature type="initiator methionine" description="Removed" evidence="1">
    <location>
        <position position="1"/>
    </location>
</feature>
<feature type="chain" id="PRO_0000086051" description="cAMP-dependent protein kinase catalytic subunit alpha">
    <location>
        <begin position="2"/>
        <end position="351"/>
    </location>
</feature>
<feature type="domain" description="Protein kinase" evidence="5">
    <location>
        <begin position="44"/>
        <end position="298"/>
    </location>
</feature>
<feature type="domain" description="AGC-kinase C-terminal" evidence="6">
    <location>
        <begin position="299"/>
        <end position="351"/>
    </location>
</feature>
<feature type="active site" description="Proton acceptor" evidence="5 7">
    <location>
        <position position="167"/>
    </location>
</feature>
<feature type="binding site" evidence="5">
    <location>
        <begin position="50"/>
        <end position="58"/>
    </location>
    <ligand>
        <name>ATP</name>
        <dbReference type="ChEBI" id="CHEBI:30616"/>
    </ligand>
</feature>
<feature type="binding site" evidence="5">
    <location>
        <position position="73"/>
    </location>
    <ligand>
        <name>ATP</name>
        <dbReference type="ChEBI" id="CHEBI:30616"/>
    </ligand>
</feature>
<feature type="binding site" evidence="5">
    <location>
        <begin position="122"/>
        <end position="128"/>
    </location>
    <ligand>
        <name>ATP</name>
        <dbReference type="ChEBI" id="CHEBI:30616"/>
    </ligand>
</feature>
<feature type="binding site" evidence="5">
    <location>
        <begin position="169"/>
        <end position="172"/>
    </location>
    <ligand>
        <name>ATP</name>
        <dbReference type="ChEBI" id="CHEBI:30616"/>
    </ligand>
</feature>
<feature type="modified residue" description="Deamidated asparagine" evidence="2">
    <location>
        <position position="3"/>
    </location>
</feature>
<feature type="modified residue" description="Phosphoserine; by autocatalysis" evidence="2">
    <location>
        <position position="11"/>
    </location>
</feature>
<feature type="modified residue" description="Phosphothreonine" evidence="3">
    <location>
        <position position="49"/>
    </location>
</feature>
<feature type="modified residue" description="Phosphoserine" evidence="2">
    <location>
        <position position="140"/>
    </location>
</feature>
<feature type="modified residue" description="Phosphothreonine" evidence="3">
    <location>
        <position position="196"/>
    </location>
</feature>
<feature type="modified residue" description="Phosphothreonine; by PDPK1" evidence="1">
    <location>
        <position position="198"/>
    </location>
</feature>
<feature type="modified residue" description="Phosphotyrosine" evidence="2">
    <location>
        <position position="331"/>
    </location>
</feature>
<feature type="modified residue" description="Phosphoserine" evidence="1">
    <location>
        <position position="339"/>
    </location>
</feature>
<feature type="lipid moiety-binding region" description="N-myristoyl glycine" evidence="3">
    <location>
        <position position="2"/>
    </location>
</feature>
<feature type="helix" evidence="11">
    <location>
        <begin position="14"/>
        <end position="32"/>
    </location>
</feature>
<feature type="helix" evidence="11">
    <location>
        <begin position="41"/>
        <end position="43"/>
    </location>
</feature>
<feature type="strand" evidence="11">
    <location>
        <begin position="44"/>
        <end position="52"/>
    </location>
</feature>
<feature type="strand" evidence="11">
    <location>
        <begin position="54"/>
        <end position="63"/>
    </location>
</feature>
<feature type="turn" evidence="11">
    <location>
        <begin position="64"/>
        <end position="66"/>
    </location>
</feature>
<feature type="strand" evidence="11">
    <location>
        <begin position="69"/>
        <end position="76"/>
    </location>
</feature>
<feature type="helix" evidence="11">
    <location>
        <begin position="77"/>
        <end position="82"/>
    </location>
</feature>
<feature type="helix" evidence="11">
    <location>
        <begin position="86"/>
        <end position="98"/>
    </location>
</feature>
<feature type="strand" evidence="11">
    <location>
        <begin position="107"/>
        <end position="112"/>
    </location>
</feature>
<feature type="strand" evidence="11">
    <location>
        <begin position="114"/>
        <end position="122"/>
    </location>
</feature>
<feature type="helix" evidence="11">
    <location>
        <begin position="129"/>
        <end position="136"/>
    </location>
</feature>
<feature type="helix" evidence="11">
    <location>
        <begin position="141"/>
        <end position="160"/>
    </location>
</feature>
<feature type="helix" evidence="11">
    <location>
        <begin position="170"/>
        <end position="172"/>
    </location>
</feature>
<feature type="strand" evidence="11">
    <location>
        <begin position="173"/>
        <end position="175"/>
    </location>
</feature>
<feature type="strand" evidence="11">
    <location>
        <begin position="181"/>
        <end position="183"/>
    </location>
</feature>
<feature type="strand" evidence="10">
    <location>
        <begin position="199"/>
        <end position="201"/>
    </location>
</feature>
<feature type="helix" evidence="11">
    <location>
        <begin position="203"/>
        <end position="205"/>
    </location>
</feature>
<feature type="helix" evidence="11">
    <location>
        <begin position="208"/>
        <end position="211"/>
    </location>
</feature>
<feature type="strand" evidence="9">
    <location>
        <begin position="212"/>
        <end position="214"/>
    </location>
</feature>
<feature type="helix" evidence="11">
    <location>
        <begin position="219"/>
        <end position="234"/>
    </location>
</feature>
<feature type="helix" evidence="11">
    <location>
        <begin position="244"/>
        <end position="252"/>
    </location>
</feature>
<feature type="helix" evidence="11">
    <location>
        <begin position="264"/>
        <end position="273"/>
    </location>
</feature>
<feature type="helix" evidence="11">
    <location>
        <begin position="278"/>
        <end position="280"/>
    </location>
</feature>
<feature type="turn" evidence="11">
    <location>
        <begin position="286"/>
        <end position="289"/>
    </location>
</feature>
<feature type="helix" evidence="11">
    <location>
        <begin position="290"/>
        <end position="293"/>
    </location>
</feature>
<feature type="helix" evidence="11">
    <location>
        <begin position="296"/>
        <end position="298"/>
    </location>
</feature>
<feature type="helix" evidence="11">
    <location>
        <begin position="303"/>
        <end position="307"/>
    </location>
</feature>
<feature type="helix" evidence="12">
    <location>
        <begin position="325"/>
        <end position="327"/>
    </location>
</feature>
<feature type="turn" evidence="11">
    <location>
        <begin position="345"/>
        <end position="350"/>
    </location>
</feature>
<dbReference type="EC" id="2.7.11.11"/>
<dbReference type="EMBL" id="M63311">
    <property type="protein sequence ID" value="AAA37010.1"/>
    <property type="molecule type" value="mRNA"/>
</dbReference>
<dbReference type="PIR" id="B40384">
    <property type="entry name" value="OKHYCA"/>
</dbReference>
<dbReference type="PDB" id="4WIH">
    <property type="method" value="X-ray"/>
    <property type="resolution" value="1.14 A"/>
    <property type="chains" value="A=1-351"/>
</dbReference>
<dbReference type="PDB" id="5LCP">
    <property type="method" value="X-ray"/>
    <property type="resolution" value="1.43 A"/>
    <property type="chains" value="A=1-351"/>
</dbReference>
<dbReference type="PDB" id="5LCQ">
    <property type="method" value="X-ray"/>
    <property type="resolution" value="1.42 A"/>
    <property type="chains" value="A=1-351"/>
</dbReference>
<dbReference type="PDB" id="5LCR">
    <property type="method" value="X-ray"/>
    <property type="resolution" value="1.56 A"/>
    <property type="chains" value="A=1-351"/>
</dbReference>
<dbReference type="PDB" id="5LCT">
    <property type="method" value="X-ray"/>
    <property type="resolution" value="1.61 A"/>
    <property type="chains" value="A=1-351"/>
</dbReference>
<dbReference type="PDB" id="5LCU">
    <property type="method" value="X-ray"/>
    <property type="resolution" value="1.58 A"/>
    <property type="chains" value="A=1-351"/>
</dbReference>
<dbReference type="PDB" id="5M0B">
    <property type="method" value="X-ray"/>
    <property type="resolution" value="1.51 A"/>
    <property type="chains" value="A=1-351"/>
</dbReference>
<dbReference type="PDB" id="5M0C">
    <property type="method" value="X-ray"/>
    <property type="resolution" value="1.73 A"/>
    <property type="chains" value="A=1-351"/>
</dbReference>
<dbReference type="PDB" id="5M0L">
    <property type="method" value="X-ray"/>
    <property type="resolution" value="1.47 A"/>
    <property type="chains" value="A=1-351"/>
</dbReference>
<dbReference type="PDB" id="5M0U">
    <property type="method" value="X-ray"/>
    <property type="resolution" value="1.67 A"/>
    <property type="chains" value="A=1-351"/>
</dbReference>
<dbReference type="PDB" id="5M6V">
    <property type="method" value="X-ray"/>
    <property type="resolution" value="1.42 A"/>
    <property type="chains" value="A=1-351"/>
</dbReference>
<dbReference type="PDB" id="5M6Y">
    <property type="method" value="X-ray"/>
    <property type="resolution" value="1.37 A"/>
    <property type="chains" value="A=1-351"/>
</dbReference>
<dbReference type="PDB" id="5M71">
    <property type="method" value="X-ray"/>
    <property type="resolution" value="1.49 A"/>
    <property type="chains" value="A=1-351"/>
</dbReference>
<dbReference type="PDB" id="5M75">
    <property type="method" value="X-ray"/>
    <property type="resolution" value="1.54 A"/>
    <property type="chains" value="A=1-351"/>
</dbReference>
<dbReference type="PDB" id="5MHI">
    <property type="method" value="X-ray"/>
    <property type="resolution" value="1.49 A"/>
    <property type="chains" value="A=1-351"/>
</dbReference>
<dbReference type="PDB" id="5N1D">
    <property type="method" value="X-ray"/>
    <property type="resolution" value="1.61 A"/>
    <property type="chains" value="A=1-351"/>
</dbReference>
<dbReference type="PDB" id="5N1E">
    <property type="method" value="X-ray"/>
    <property type="resolution" value="1.53 A"/>
    <property type="chains" value="A=1-351"/>
</dbReference>
<dbReference type="PDB" id="5N1F">
    <property type="method" value="X-ray"/>
    <property type="resolution" value="1.12 A"/>
    <property type="chains" value="A=1-351"/>
</dbReference>
<dbReference type="PDB" id="5N1G">
    <property type="method" value="X-ray"/>
    <property type="resolution" value="1.14 A"/>
    <property type="chains" value="A=1-351"/>
</dbReference>
<dbReference type="PDB" id="5N1H">
    <property type="method" value="X-ray"/>
    <property type="resolution" value="1.18 A"/>
    <property type="chains" value="A=1-351"/>
</dbReference>
<dbReference type="PDB" id="5N1K">
    <property type="method" value="X-ray"/>
    <property type="resolution" value="1.80 A"/>
    <property type="chains" value="A=1-351"/>
</dbReference>
<dbReference type="PDB" id="5N1L">
    <property type="method" value="X-ray"/>
    <property type="resolution" value="1.49 A"/>
    <property type="chains" value="A=1-351"/>
</dbReference>
<dbReference type="PDB" id="5N1M">
    <property type="method" value="X-ray"/>
    <property type="resolution" value="1.44 A"/>
    <property type="chains" value="A=1-351"/>
</dbReference>
<dbReference type="PDB" id="5N1N">
    <property type="method" value="X-ray"/>
    <property type="resolution" value="1.41 A"/>
    <property type="chains" value="A=1-351"/>
</dbReference>
<dbReference type="PDB" id="5N1O">
    <property type="method" value="X-ray"/>
    <property type="resolution" value="1.80 A"/>
    <property type="chains" value="A=1-351"/>
</dbReference>
<dbReference type="PDB" id="5N32">
    <property type="method" value="X-ray"/>
    <property type="resolution" value="1.83 A"/>
    <property type="chains" value="A=1-351"/>
</dbReference>
<dbReference type="PDB" id="5N33">
    <property type="method" value="X-ray"/>
    <property type="resolution" value="1.43 A"/>
    <property type="chains" value="A=1-351"/>
</dbReference>
<dbReference type="PDB" id="5N36">
    <property type="method" value="X-ray"/>
    <property type="resolution" value="1.58 A"/>
    <property type="chains" value="A=1-351"/>
</dbReference>
<dbReference type="PDB" id="5N37">
    <property type="method" value="X-ray"/>
    <property type="resolution" value="1.59 A"/>
    <property type="chains" value="A=1-351"/>
</dbReference>
<dbReference type="PDB" id="5N39">
    <property type="method" value="X-ray"/>
    <property type="resolution" value="1.45 A"/>
    <property type="chains" value="A=1-351"/>
</dbReference>
<dbReference type="PDB" id="5N3A">
    <property type="method" value="X-ray"/>
    <property type="resolution" value="1.40 A"/>
    <property type="chains" value="A=1-351"/>
</dbReference>
<dbReference type="PDB" id="5N3B">
    <property type="method" value="X-ray"/>
    <property type="resolution" value="1.64 A"/>
    <property type="chains" value="A=1-351"/>
</dbReference>
<dbReference type="PDB" id="5N3C">
    <property type="method" value="X-ray"/>
    <property type="resolution" value="1.77 A"/>
    <property type="chains" value="A=1-351"/>
</dbReference>
<dbReference type="PDB" id="5N3D">
    <property type="method" value="X-ray"/>
    <property type="resolution" value="1.77 A"/>
    <property type="chains" value="A=1-351"/>
</dbReference>
<dbReference type="PDB" id="5N3E">
    <property type="method" value="X-ray"/>
    <property type="resolution" value="1.53 A"/>
    <property type="chains" value="A=1-351"/>
</dbReference>
<dbReference type="PDB" id="5N3F">
    <property type="method" value="X-ray"/>
    <property type="resolution" value="1.68 A"/>
    <property type="chains" value="A=1-351"/>
</dbReference>
<dbReference type="PDB" id="5N3G">
    <property type="method" value="X-ray"/>
    <property type="resolution" value="1.16 A"/>
    <property type="chains" value="A=1-351"/>
</dbReference>
<dbReference type="PDB" id="5N3H">
    <property type="method" value="X-ray"/>
    <property type="resolution" value="1.36 A"/>
    <property type="chains" value="A=1-351"/>
</dbReference>
<dbReference type="PDB" id="5N3I">
    <property type="method" value="X-ray"/>
    <property type="resolution" value="1.14 A"/>
    <property type="chains" value="A=1-351"/>
</dbReference>
<dbReference type="PDB" id="5N3J">
    <property type="method" value="X-ray"/>
    <property type="resolution" value="1.12 A"/>
    <property type="chains" value="A=1-351"/>
</dbReference>
<dbReference type="PDB" id="5N3K">
    <property type="method" value="X-ray"/>
    <property type="resolution" value="1.33 A"/>
    <property type="chains" value="A=1-351"/>
</dbReference>
<dbReference type="PDB" id="5N3L">
    <property type="method" value="X-ray"/>
    <property type="resolution" value="1.38 A"/>
    <property type="chains" value="A=1-351"/>
</dbReference>
<dbReference type="PDB" id="5N3M">
    <property type="method" value="X-ray"/>
    <property type="resolution" value="1.23 A"/>
    <property type="chains" value="A=1-351"/>
</dbReference>
<dbReference type="PDB" id="5N3N">
    <property type="method" value="X-ray"/>
    <property type="resolution" value="1.22 A"/>
    <property type="chains" value="A=1-351"/>
</dbReference>
<dbReference type="PDB" id="5N3O">
    <property type="method" value="X-ray"/>
    <property type="resolution" value="1.32 A"/>
    <property type="chains" value="A=1-351"/>
</dbReference>
<dbReference type="PDB" id="5N3P">
    <property type="method" value="X-ray"/>
    <property type="resolution" value="1.58 A"/>
    <property type="chains" value="A=1-351"/>
</dbReference>
<dbReference type="PDB" id="5N3Q">
    <property type="method" value="X-ray"/>
    <property type="resolution" value="1.31 A"/>
    <property type="chains" value="A=1-351"/>
</dbReference>
<dbReference type="PDB" id="5N3R">
    <property type="method" value="X-ray"/>
    <property type="resolution" value="1.36 A"/>
    <property type="chains" value="A=1-351"/>
</dbReference>
<dbReference type="PDB" id="5N3S">
    <property type="method" value="X-ray"/>
    <property type="resolution" value="1.14 A"/>
    <property type="chains" value="A=1-351"/>
</dbReference>
<dbReference type="PDB" id="5N3T">
    <property type="method" value="X-ray"/>
    <property type="resolution" value="1.21 A"/>
    <property type="chains" value="A=1-351"/>
</dbReference>
<dbReference type="PDB" id="5N7P">
    <property type="method" value="X-ray"/>
    <property type="resolution" value="1.50 A"/>
    <property type="chains" value="A=1-351"/>
</dbReference>
<dbReference type="PDB" id="5N7U">
    <property type="method" value="X-ray"/>
    <property type="resolution" value="1.37 A"/>
    <property type="chains" value="A=1-351"/>
</dbReference>
<dbReference type="PDB" id="5NTJ">
    <property type="method" value="X-ray"/>
    <property type="resolution" value="1.56 A"/>
    <property type="chains" value="A=1-351"/>
</dbReference>
<dbReference type="PDB" id="5NW8">
    <property type="method" value="X-ray"/>
    <property type="resolution" value="2.09 A"/>
    <property type="chains" value="A=1-351"/>
</dbReference>
<dbReference type="PDB" id="5O0E">
    <property type="method" value="X-ray"/>
    <property type="resolution" value="1.50 A"/>
    <property type="chains" value="A=1-351"/>
</dbReference>
<dbReference type="PDB" id="5O5M">
    <property type="method" value="X-ray"/>
    <property type="resolution" value="1.58 A"/>
    <property type="chains" value="A=1-351"/>
</dbReference>
<dbReference type="PDB" id="5OK3">
    <property type="method" value="X-ray"/>
    <property type="resolution" value="1.59 A"/>
    <property type="chains" value="A=1-351"/>
</dbReference>
<dbReference type="PDB" id="5OL3">
    <property type="method" value="X-ray"/>
    <property type="resolution" value="1.58 A"/>
    <property type="chains" value="A=1-351"/>
</dbReference>
<dbReference type="PDB" id="5OT3">
    <property type="method" value="X-ray"/>
    <property type="resolution" value="2.04 A"/>
    <property type="chains" value="A=1-351"/>
</dbReference>
<dbReference type="PDB" id="5OTG">
    <property type="method" value="X-ray"/>
    <property type="resolution" value="1.73 A"/>
    <property type="chains" value="A=1-351"/>
</dbReference>
<dbReference type="PDB" id="5OUA">
    <property type="method" value="X-ray"/>
    <property type="resolution" value="1.67 A"/>
    <property type="chains" value="A=1-351"/>
</dbReference>
<dbReference type="PDB" id="5OUC">
    <property type="method" value="X-ray"/>
    <property type="resolution" value="1.46 A"/>
    <property type="chains" value="A=1-351"/>
</dbReference>
<dbReference type="PDB" id="5OUS">
    <property type="method" value="X-ray"/>
    <property type="resolution" value="2.21 A"/>
    <property type="chains" value="A=1-351"/>
</dbReference>
<dbReference type="PDB" id="6EGW">
    <property type="method" value="X-ray"/>
    <property type="resolution" value="1.74 A"/>
    <property type="chains" value="A=1-351"/>
</dbReference>
<dbReference type="PDB" id="6EH0">
    <property type="method" value="X-ray"/>
    <property type="resolution" value="1.49 A"/>
    <property type="chains" value="A=1-351"/>
</dbReference>
<dbReference type="PDB" id="6EH2">
    <property type="method" value="X-ray"/>
    <property type="resolution" value="1.76 A"/>
    <property type="chains" value="A=1-351"/>
</dbReference>
<dbReference type="PDB" id="6EH3">
    <property type="method" value="X-ray"/>
    <property type="resolution" value="1.95 A"/>
    <property type="chains" value="A=1-351"/>
</dbReference>
<dbReference type="PDB" id="6EM2">
    <property type="method" value="X-ray"/>
    <property type="resolution" value="1.30 A"/>
    <property type="chains" value="A=1-351"/>
</dbReference>
<dbReference type="PDB" id="6EM6">
    <property type="method" value="X-ray"/>
    <property type="resolution" value="1.64 A"/>
    <property type="chains" value="A=1-351"/>
</dbReference>
<dbReference type="PDB" id="6EM7">
    <property type="method" value="X-ray"/>
    <property type="resolution" value="1.24 A"/>
    <property type="chains" value="A=1-351"/>
</dbReference>
<dbReference type="PDB" id="6EMA">
    <property type="method" value="X-ray"/>
    <property type="resolution" value="1.88 A"/>
    <property type="chains" value="A=1-351"/>
</dbReference>
<dbReference type="PDB" id="6ERT">
    <property type="method" value="X-ray"/>
    <property type="resolution" value="1.80 A"/>
    <property type="chains" value="A=1-351"/>
</dbReference>
<dbReference type="PDB" id="6ERU">
    <property type="method" value="X-ray"/>
    <property type="resolution" value="2.15 A"/>
    <property type="chains" value="A=1-351"/>
</dbReference>
<dbReference type="PDB" id="6ERV">
    <property type="method" value="X-ray"/>
    <property type="resolution" value="2.06 A"/>
    <property type="chains" value="A=1-351"/>
</dbReference>
<dbReference type="PDB" id="6ERW">
    <property type="method" value="X-ray"/>
    <property type="resolution" value="1.89 A"/>
    <property type="chains" value="A=1-351"/>
</dbReference>
<dbReference type="PDB" id="6ESA">
    <property type="method" value="X-ray"/>
    <property type="resolution" value="1.31 A"/>
    <property type="chains" value="A=1-351"/>
</dbReference>
<dbReference type="PDB" id="6F14">
    <property type="method" value="X-ray"/>
    <property type="resolution" value="1.87 A"/>
    <property type="chains" value="A=1-351"/>
</dbReference>
<dbReference type="PDB" id="6I2A">
    <property type="method" value="X-ray"/>
    <property type="resolution" value="1.75 A"/>
    <property type="chains" value="A=1-351"/>
</dbReference>
<dbReference type="PDB" id="6I2B">
    <property type="method" value="X-ray"/>
    <property type="resolution" value="1.97 A"/>
    <property type="chains" value="A=1-351"/>
</dbReference>
<dbReference type="PDB" id="6I2C">
    <property type="method" value="X-ray"/>
    <property type="resolution" value="1.82 A"/>
    <property type="chains" value="A=1-351"/>
</dbReference>
<dbReference type="PDB" id="6I2D">
    <property type="method" value="X-ray"/>
    <property type="resolution" value="1.91 A"/>
    <property type="chains" value="A=1-351"/>
</dbReference>
<dbReference type="PDB" id="6I2H">
    <property type="method" value="X-ray"/>
    <property type="resolution" value="1.68 A"/>
    <property type="chains" value="A=1-351"/>
</dbReference>
<dbReference type="PDB" id="6SNN">
    <property type="method" value="X-ray"/>
    <property type="resolution" value="1.82 A"/>
    <property type="chains" value="A=1-351"/>
</dbReference>
<dbReference type="PDB" id="6SNX">
    <property type="method" value="X-ray"/>
    <property type="resolution" value="1.40 A"/>
    <property type="chains" value="A=1-351"/>
</dbReference>
<dbReference type="PDB" id="6SOX">
    <property type="method" value="X-ray"/>
    <property type="resolution" value="1.38 A"/>
    <property type="chains" value="A=1-351"/>
</dbReference>
<dbReference type="PDB" id="6SPM">
    <property type="method" value="X-ray"/>
    <property type="resolution" value="1.37 A"/>
    <property type="chains" value="A=1-351"/>
</dbReference>
<dbReference type="PDB" id="6SPS">
    <property type="method" value="X-ray"/>
    <property type="resolution" value="1.65 A"/>
    <property type="chains" value="A=1-351"/>
</dbReference>
<dbReference type="PDB" id="6SPU">
    <property type="method" value="X-ray"/>
    <property type="resolution" value="1.39 A"/>
    <property type="chains" value="A=1-351"/>
</dbReference>
<dbReference type="PDB" id="6SPY">
    <property type="method" value="X-ray"/>
    <property type="resolution" value="1.60 A"/>
    <property type="chains" value="A=1-351"/>
</dbReference>
<dbReference type="PDB" id="6SQ1">
    <property type="method" value="X-ray"/>
    <property type="resolution" value="1.49 A"/>
    <property type="chains" value="A=1-351"/>
</dbReference>
<dbReference type="PDB" id="6Y05">
    <property type="method" value="X-ray"/>
    <property type="resolution" value="1.70 A"/>
    <property type="chains" value="A=1-351"/>
</dbReference>
<dbReference type="PDB" id="6Y0B">
    <property type="method" value="X-ray"/>
    <property type="resolution" value="1.71 A"/>
    <property type="chains" value="A=1-351"/>
</dbReference>
<dbReference type="PDB" id="6Y2O">
    <property type="method" value="X-ray"/>
    <property type="resolution" value="2.01 A"/>
    <property type="chains" value="A=1-351"/>
</dbReference>
<dbReference type="PDB" id="6Y2U">
    <property type="method" value="X-ray"/>
    <property type="resolution" value="1.93 A"/>
    <property type="chains" value="A=1-351"/>
</dbReference>
<dbReference type="PDB" id="6Y89">
    <property type="method" value="X-ray"/>
    <property type="resolution" value="1.56 A"/>
    <property type="chains" value="A=1-351"/>
</dbReference>
<dbReference type="PDB" id="6Y8C">
    <property type="method" value="X-ray"/>
    <property type="resolution" value="1.76 A"/>
    <property type="chains" value="A=1-351"/>
</dbReference>
<dbReference type="PDB" id="6YNA">
    <property type="method" value="X-ray"/>
    <property type="resolution" value="1.47 A"/>
    <property type="chains" value="A=1-351"/>
</dbReference>
<dbReference type="PDB" id="6YNB">
    <property type="method" value="X-ray"/>
    <property type="resolution" value="1.72 A"/>
    <property type="chains" value="A=1-351"/>
</dbReference>
<dbReference type="PDB" id="6YNC">
    <property type="method" value="X-ray"/>
    <property type="resolution" value="1.40 A"/>
    <property type="chains" value="A=1-351"/>
</dbReference>
<dbReference type="PDB" id="6YNR">
    <property type="method" value="X-ray"/>
    <property type="resolution" value="1.90 A"/>
    <property type="chains" value="A=1-351"/>
</dbReference>
<dbReference type="PDB" id="6YNT">
    <property type="method" value="X-ray"/>
    <property type="resolution" value="1.52 A"/>
    <property type="chains" value="A=1-351"/>
</dbReference>
<dbReference type="PDB" id="6YOT">
    <property type="method" value="X-ray"/>
    <property type="resolution" value="1.96 A"/>
    <property type="chains" value="A=1-351"/>
</dbReference>
<dbReference type="PDB" id="6YOU">
    <property type="method" value="X-ray"/>
    <property type="resolution" value="1.73 A"/>
    <property type="chains" value="A=1-351"/>
</dbReference>
<dbReference type="PDB" id="6YPP">
    <property type="method" value="X-ray"/>
    <property type="resolution" value="1.75 A"/>
    <property type="chains" value="A=1-351"/>
</dbReference>
<dbReference type="PDB" id="6YPS">
    <property type="method" value="X-ray"/>
    <property type="resolution" value="1.35 A"/>
    <property type="chains" value="A=1-351"/>
</dbReference>
<dbReference type="PDB" id="6YQI">
    <property type="method" value="X-ray"/>
    <property type="resolution" value="1.42 A"/>
    <property type="chains" value="A=1-351"/>
</dbReference>
<dbReference type="PDB" id="6YQJ">
    <property type="method" value="X-ray"/>
    <property type="resolution" value="1.58 A"/>
    <property type="chains" value="A=1-351"/>
</dbReference>
<dbReference type="PDB" id="6YQK">
    <property type="method" value="X-ray"/>
    <property type="resolution" value="1.67 A"/>
    <property type="chains" value="A=1-351"/>
</dbReference>
<dbReference type="PDB" id="6Z08">
    <property type="method" value="X-ray"/>
    <property type="resolution" value="1.49 A"/>
    <property type="chains" value="A=1-351"/>
</dbReference>
<dbReference type="PDB" id="6Z44">
    <property type="method" value="X-ray"/>
    <property type="resolution" value="1.38 A"/>
    <property type="chains" value="A=1-351"/>
</dbReference>
<dbReference type="PDB" id="6ZN0">
    <property type="method" value="X-ray"/>
    <property type="resolution" value="1.59 A"/>
    <property type="chains" value="A=1-351"/>
</dbReference>
<dbReference type="PDB" id="7AXT">
    <property type="method" value="X-ray"/>
    <property type="resolution" value="1.86 A"/>
    <property type="chains" value="A=1-351"/>
</dbReference>
<dbReference type="PDB" id="7AXV">
    <property type="method" value="X-ray"/>
    <property type="resolution" value="1.79 A"/>
    <property type="chains" value="A=1-351"/>
</dbReference>
<dbReference type="PDB" id="7AXW">
    <property type="method" value="X-ray"/>
    <property type="resolution" value="1.69 A"/>
    <property type="chains" value="A=1-351"/>
</dbReference>
<dbReference type="PDB" id="7BAQ">
    <property type="method" value="X-ray"/>
    <property type="resolution" value="1.54 A"/>
    <property type="chains" value="A=1-351"/>
</dbReference>
<dbReference type="PDB" id="7BAR">
    <property type="method" value="X-ray"/>
    <property type="resolution" value="1.37 A"/>
    <property type="chains" value="A=1-351"/>
</dbReference>
<dbReference type="PDB" id="7BB0">
    <property type="method" value="X-ray"/>
    <property type="resolution" value="1.75 A"/>
    <property type="chains" value="A=1-351"/>
</dbReference>
<dbReference type="PDB" id="7PID">
    <property type="method" value="X-ray"/>
    <property type="resolution" value="1.50 A"/>
    <property type="chains" value="A=1-351"/>
</dbReference>
<dbReference type="PDB" id="7PIE">
    <property type="method" value="X-ray"/>
    <property type="resolution" value="1.43 A"/>
    <property type="chains" value="A=1-351"/>
</dbReference>
<dbReference type="PDB" id="7PIF">
    <property type="method" value="X-ray"/>
    <property type="resolution" value="1.40 A"/>
    <property type="chains" value="A=1-351"/>
</dbReference>
<dbReference type="PDB" id="7PIG">
    <property type="method" value="X-ray"/>
    <property type="resolution" value="1.55 A"/>
    <property type="chains" value="A=1-351"/>
</dbReference>
<dbReference type="PDB" id="7PIH">
    <property type="method" value="X-ray"/>
    <property type="resolution" value="1.37 A"/>
    <property type="chains" value="A=1-351"/>
</dbReference>
<dbReference type="PDB" id="7PNS">
    <property type="method" value="X-ray"/>
    <property type="resolution" value="1.85 A"/>
    <property type="chains" value="A=1-351"/>
</dbReference>
<dbReference type="PDBsum" id="4WIH"/>
<dbReference type="PDBsum" id="5LCP"/>
<dbReference type="PDBsum" id="5LCQ"/>
<dbReference type="PDBsum" id="5LCR"/>
<dbReference type="PDBsum" id="5LCT"/>
<dbReference type="PDBsum" id="5LCU"/>
<dbReference type="PDBsum" id="5M0B"/>
<dbReference type="PDBsum" id="5M0C"/>
<dbReference type="PDBsum" id="5M0L"/>
<dbReference type="PDBsum" id="5M0U"/>
<dbReference type="PDBsum" id="5M6V"/>
<dbReference type="PDBsum" id="5M6Y"/>
<dbReference type="PDBsum" id="5M71"/>
<dbReference type="PDBsum" id="5M75"/>
<dbReference type="PDBsum" id="5MHI"/>
<dbReference type="PDBsum" id="5N1D"/>
<dbReference type="PDBsum" id="5N1E"/>
<dbReference type="PDBsum" id="5N1F"/>
<dbReference type="PDBsum" id="5N1G"/>
<dbReference type="PDBsum" id="5N1H"/>
<dbReference type="PDBsum" id="5N1K"/>
<dbReference type="PDBsum" id="5N1L"/>
<dbReference type="PDBsum" id="5N1M"/>
<dbReference type="PDBsum" id="5N1N"/>
<dbReference type="PDBsum" id="5N1O"/>
<dbReference type="PDBsum" id="5N32"/>
<dbReference type="PDBsum" id="5N33"/>
<dbReference type="PDBsum" id="5N36"/>
<dbReference type="PDBsum" id="5N37"/>
<dbReference type="PDBsum" id="5N39"/>
<dbReference type="PDBsum" id="5N3A"/>
<dbReference type="PDBsum" id="5N3B"/>
<dbReference type="PDBsum" id="5N3C"/>
<dbReference type="PDBsum" id="5N3D"/>
<dbReference type="PDBsum" id="5N3E"/>
<dbReference type="PDBsum" id="5N3F"/>
<dbReference type="PDBsum" id="5N3G"/>
<dbReference type="PDBsum" id="5N3H"/>
<dbReference type="PDBsum" id="5N3I"/>
<dbReference type="PDBsum" id="5N3J"/>
<dbReference type="PDBsum" id="5N3K"/>
<dbReference type="PDBsum" id="5N3L"/>
<dbReference type="PDBsum" id="5N3M"/>
<dbReference type="PDBsum" id="5N3N"/>
<dbReference type="PDBsum" id="5N3O"/>
<dbReference type="PDBsum" id="5N3P"/>
<dbReference type="PDBsum" id="5N3Q"/>
<dbReference type="PDBsum" id="5N3R"/>
<dbReference type="PDBsum" id="5N3S"/>
<dbReference type="PDBsum" id="5N3T"/>
<dbReference type="PDBsum" id="5N7P"/>
<dbReference type="PDBsum" id="5N7U"/>
<dbReference type="PDBsum" id="5NTJ"/>
<dbReference type="PDBsum" id="5NW8"/>
<dbReference type="PDBsum" id="5O0E"/>
<dbReference type="PDBsum" id="5O5M"/>
<dbReference type="PDBsum" id="5OK3"/>
<dbReference type="PDBsum" id="5OL3"/>
<dbReference type="PDBsum" id="5OT3"/>
<dbReference type="PDBsum" id="5OTG"/>
<dbReference type="PDBsum" id="5OUA"/>
<dbReference type="PDBsum" id="5OUC"/>
<dbReference type="PDBsum" id="5OUS"/>
<dbReference type="PDBsum" id="6EGW"/>
<dbReference type="PDBsum" id="6EH0"/>
<dbReference type="PDBsum" id="6EH2"/>
<dbReference type="PDBsum" id="6EH3"/>
<dbReference type="PDBsum" id="6EM2"/>
<dbReference type="PDBsum" id="6EM6"/>
<dbReference type="PDBsum" id="6EM7"/>
<dbReference type="PDBsum" id="6EMA"/>
<dbReference type="PDBsum" id="6ERT"/>
<dbReference type="PDBsum" id="6ERU"/>
<dbReference type="PDBsum" id="6ERV"/>
<dbReference type="PDBsum" id="6ERW"/>
<dbReference type="PDBsum" id="6ESA"/>
<dbReference type="PDBsum" id="6F14"/>
<dbReference type="PDBsum" id="6I2A"/>
<dbReference type="PDBsum" id="6I2B"/>
<dbReference type="PDBsum" id="6I2C"/>
<dbReference type="PDBsum" id="6I2D"/>
<dbReference type="PDBsum" id="6I2H"/>
<dbReference type="PDBsum" id="6SNN"/>
<dbReference type="PDBsum" id="6SNX"/>
<dbReference type="PDBsum" id="6SOX"/>
<dbReference type="PDBsum" id="6SPM"/>
<dbReference type="PDBsum" id="6SPS"/>
<dbReference type="PDBsum" id="6SPU"/>
<dbReference type="PDBsum" id="6SPY"/>
<dbReference type="PDBsum" id="6SQ1"/>
<dbReference type="PDBsum" id="6Y05"/>
<dbReference type="PDBsum" id="6Y0B"/>
<dbReference type="PDBsum" id="6Y2O"/>
<dbReference type="PDBsum" id="6Y2U"/>
<dbReference type="PDBsum" id="6Y89"/>
<dbReference type="PDBsum" id="6Y8C"/>
<dbReference type="PDBsum" id="6YNA"/>
<dbReference type="PDBsum" id="6YNB"/>
<dbReference type="PDBsum" id="6YNC"/>
<dbReference type="PDBsum" id="6YNR"/>
<dbReference type="PDBsum" id="6YNT"/>
<dbReference type="PDBsum" id="6YOT"/>
<dbReference type="PDBsum" id="6YOU"/>
<dbReference type="PDBsum" id="6YPP"/>
<dbReference type="PDBsum" id="6YPS"/>
<dbReference type="PDBsum" id="6YQI"/>
<dbReference type="PDBsum" id="6YQJ"/>
<dbReference type="PDBsum" id="6YQK"/>
<dbReference type="PDBsum" id="6Z08"/>
<dbReference type="PDBsum" id="6Z44"/>
<dbReference type="PDBsum" id="6ZN0"/>
<dbReference type="PDBsum" id="7AXT"/>
<dbReference type="PDBsum" id="7AXV"/>
<dbReference type="PDBsum" id="7AXW"/>
<dbReference type="PDBsum" id="7BAQ"/>
<dbReference type="PDBsum" id="7BAR"/>
<dbReference type="PDBsum" id="7BB0"/>
<dbReference type="PDBsum" id="7PID"/>
<dbReference type="PDBsum" id="7PIE"/>
<dbReference type="PDBsum" id="7PIF"/>
<dbReference type="PDBsum" id="7PIG"/>
<dbReference type="PDBsum" id="7PIH"/>
<dbReference type="PDBsum" id="7PNS"/>
<dbReference type="BMRB" id="P25321"/>
<dbReference type="SMR" id="P25321"/>
<dbReference type="ChEMBL" id="CHEMBL4295732"/>
<dbReference type="PaxDb" id="10029-XP_007612815.1"/>
<dbReference type="Ensembl" id="ENSCGRT00001021270.1">
    <property type="protein sequence ID" value="ENSCGRP00001017026.1"/>
    <property type="gene ID" value="ENSCGRG00001017184.1"/>
</dbReference>
<dbReference type="eggNOG" id="KOG0616">
    <property type="taxonomic scope" value="Eukaryota"/>
</dbReference>
<dbReference type="GeneTree" id="ENSGT00940000162186"/>
<dbReference type="OrthoDB" id="63267at2759"/>
<dbReference type="BRENDA" id="2.7.11.11">
    <property type="organism ID" value="1309"/>
</dbReference>
<dbReference type="EvolutionaryTrace" id="P25321"/>
<dbReference type="Proteomes" id="UP000694386">
    <property type="component" value="Unplaced"/>
</dbReference>
<dbReference type="Proteomes" id="UP001108280">
    <property type="component" value="Unplaced"/>
</dbReference>
<dbReference type="GO" id="GO:0001669">
    <property type="term" value="C:acrosomal vesicle"/>
    <property type="evidence" value="ECO:0000250"/>
    <property type="project" value="UniProtKB"/>
</dbReference>
<dbReference type="GO" id="GO:0005930">
    <property type="term" value="C:axoneme"/>
    <property type="evidence" value="ECO:0007669"/>
    <property type="project" value="Ensembl"/>
</dbReference>
<dbReference type="GO" id="GO:0005952">
    <property type="term" value="C:cAMP-dependent protein kinase complex"/>
    <property type="evidence" value="ECO:0007669"/>
    <property type="project" value="Ensembl"/>
</dbReference>
<dbReference type="GO" id="GO:0005813">
    <property type="term" value="C:centrosome"/>
    <property type="evidence" value="ECO:0007669"/>
    <property type="project" value="Ensembl"/>
</dbReference>
<dbReference type="GO" id="GO:0097546">
    <property type="term" value="C:ciliary base"/>
    <property type="evidence" value="ECO:0007669"/>
    <property type="project" value="Ensembl"/>
</dbReference>
<dbReference type="GO" id="GO:0005737">
    <property type="term" value="C:cytoplasm"/>
    <property type="evidence" value="ECO:0000250"/>
    <property type="project" value="UniProtKB"/>
</dbReference>
<dbReference type="GO" id="GO:0005829">
    <property type="term" value="C:cytosol"/>
    <property type="evidence" value="ECO:0007669"/>
    <property type="project" value="Ensembl"/>
</dbReference>
<dbReference type="GO" id="GO:0098978">
    <property type="term" value="C:glutamatergic synapse"/>
    <property type="evidence" value="ECO:0007669"/>
    <property type="project" value="Ensembl"/>
</dbReference>
<dbReference type="GO" id="GO:0005739">
    <property type="term" value="C:mitochondrion"/>
    <property type="evidence" value="ECO:0007669"/>
    <property type="project" value="UniProtKB-SubCell"/>
</dbReference>
<dbReference type="GO" id="GO:0031594">
    <property type="term" value="C:neuromuscular junction"/>
    <property type="evidence" value="ECO:0007669"/>
    <property type="project" value="Ensembl"/>
</dbReference>
<dbReference type="GO" id="GO:0016607">
    <property type="term" value="C:nuclear speck"/>
    <property type="evidence" value="ECO:0007669"/>
    <property type="project" value="Ensembl"/>
</dbReference>
<dbReference type="GO" id="GO:0005634">
    <property type="term" value="C:nucleus"/>
    <property type="evidence" value="ECO:0000250"/>
    <property type="project" value="UniProtKB"/>
</dbReference>
<dbReference type="GO" id="GO:0048471">
    <property type="term" value="C:perinuclear region of cytoplasm"/>
    <property type="evidence" value="ECO:0000250"/>
    <property type="project" value="UniProtKB"/>
</dbReference>
<dbReference type="GO" id="GO:0044853">
    <property type="term" value="C:plasma membrane raft"/>
    <property type="evidence" value="ECO:0007669"/>
    <property type="project" value="Ensembl"/>
</dbReference>
<dbReference type="GO" id="GO:0098794">
    <property type="term" value="C:postsynapse"/>
    <property type="evidence" value="ECO:0007669"/>
    <property type="project" value="GOC"/>
</dbReference>
<dbReference type="GO" id="GO:0036126">
    <property type="term" value="C:sperm flagellum"/>
    <property type="evidence" value="ECO:0000250"/>
    <property type="project" value="UniProtKB"/>
</dbReference>
<dbReference type="GO" id="GO:0005524">
    <property type="term" value="F:ATP binding"/>
    <property type="evidence" value="ECO:0007669"/>
    <property type="project" value="UniProtKB-KW"/>
</dbReference>
<dbReference type="GO" id="GO:0004691">
    <property type="term" value="F:cAMP-dependent protein kinase activity"/>
    <property type="evidence" value="ECO:0000250"/>
    <property type="project" value="UniProtKB"/>
</dbReference>
<dbReference type="GO" id="GO:0000287">
    <property type="term" value="F:magnesium ion binding"/>
    <property type="evidence" value="ECO:0007669"/>
    <property type="project" value="Ensembl"/>
</dbReference>
<dbReference type="GO" id="GO:0030145">
    <property type="term" value="F:manganese ion binding"/>
    <property type="evidence" value="ECO:0007669"/>
    <property type="project" value="Ensembl"/>
</dbReference>
<dbReference type="GO" id="GO:0019904">
    <property type="term" value="F:protein domain specific binding"/>
    <property type="evidence" value="ECO:0007669"/>
    <property type="project" value="Ensembl"/>
</dbReference>
<dbReference type="GO" id="GO:0034237">
    <property type="term" value="F:protein kinase A regulatory subunit binding"/>
    <property type="evidence" value="ECO:0007669"/>
    <property type="project" value="Ensembl"/>
</dbReference>
<dbReference type="GO" id="GO:0019901">
    <property type="term" value="F:protein kinase binding"/>
    <property type="evidence" value="ECO:0007669"/>
    <property type="project" value="Ensembl"/>
</dbReference>
<dbReference type="GO" id="GO:0106310">
    <property type="term" value="F:protein serine kinase activity"/>
    <property type="evidence" value="ECO:0007669"/>
    <property type="project" value="Ensembl"/>
</dbReference>
<dbReference type="GO" id="GO:0004674">
    <property type="term" value="F:protein serine/threonine kinase activity"/>
    <property type="evidence" value="ECO:0000250"/>
    <property type="project" value="UniProtKB"/>
</dbReference>
<dbReference type="GO" id="GO:0004712">
    <property type="term" value="F:protein serine/threonine/tyrosine kinase activity"/>
    <property type="evidence" value="ECO:0007669"/>
    <property type="project" value="Ensembl"/>
</dbReference>
<dbReference type="GO" id="GO:0031625">
    <property type="term" value="F:ubiquitin protein ligase binding"/>
    <property type="evidence" value="ECO:0007669"/>
    <property type="project" value="Ensembl"/>
</dbReference>
<dbReference type="GO" id="GO:0007189">
    <property type="term" value="P:adenylate cyclase-activating G protein-coupled receptor signaling pathway"/>
    <property type="evidence" value="ECO:0007669"/>
    <property type="project" value="Ensembl"/>
</dbReference>
<dbReference type="GO" id="GO:0007193">
    <property type="term" value="P:adenylate cyclase-inhibiting G protein-coupled receptor signaling pathway"/>
    <property type="evidence" value="ECO:0007669"/>
    <property type="project" value="Ensembl"/>
</dbReference>
<dbReference type="GO" id="GO:0070417">
    <property type="term" value="P:cellular response to cold"/>
    <property type="evidence" value="ECO:0007669"/>
    <property type="project" value="Ensembl"/>
</dbReference>
<dbReference type="GO" id="GO:0071377">
    <property type="term" value="P:cellular response to glucagon stimulus"/>
    <property type="evidence" value="ECO:0007669"/>
    <property type="project" value="Ensembl"/>
</dbReference>
<dbReference type="GO" id="GO:0071333">
    <property type="term" value="P:cellular response to glucose stimulus"/>
    <property type="evidence" value="ECO:0007669"/>
    <property type="project" value="Ensembl"/>
</dbReference>
<dbReference type="GO" id="GO:0034605">
    <property type="term" value="P:cellular response to heat"/>
    <property type="evidence" value="ECO:0000250"/>
    <property type="project" value="UniProtKB"/>
</dbReference>
<dbReference type="GO" id="GO:0071374">
    <property type="term" value="P:cellular response to parathyroid hormone stimulus"/>
    <property type="evidence" value="ECO:0007669"/>
    <property type="project" value="Ensembl"/>
</dbReference>
<dbReference type="GO" id="GO:0030007">
    <property type="term" value="P:intracellular potassium ion homeostasis"/>
    <property type="evidence" value="ECO:0007669"/>
    <property type="project" value="Ensembl"/>
</dbReference>
<dbReference type="GO" id="GO:0001707">
    <property type="term" value="P:mesoderm formation"/>
    <property type="evidence" value="ECO:0007669"/>
    <property type="project" value="Ensembl"/>
</dbReference>
<dbReference type="GO" id="GO:0006397">
    <property type="term" value="P:mRNA processing"/>
    <property type="evidence" value="ECO:0007669"/>
    <property type="project" value="Ensembl"/>
</dbReference>
<dbReference type="GO" id="GO:1904539">
    <property type="term" value="P:negative regulation of glycolytic process through fructose-6-phosphate"/>
    <property type="evidence" value="ECO:0007669"/>
    <property type="project" value="Ensembl"/>
</dbReference>
<dbReference type="GO" id="GO:0045879">
    <property type="term" value="P:negative regulation of smoothened signaling pathway"/>
    <property type="evidence" value="ECO:0007669"/>
    <property type="project" value="Ensembl"/>
</dbReference>
<dbReference type="GO" id="GO:1904262">
    <property type="term" value="P:negative regulation of TORC1 signaling"/>
    <property type="evidence" value="ECO:0000250"/>
    <property type="project" value="UniProtKB"/>
</dbReference>
<dbReference type="GO" id="GO:0001843">
    <property type="term" value="P:neural tube closure"/>
    <property type="evidence" value="ECO:0007669"/>
    <property type="project" value="Ensembl"/>
</dbReference>
<dbReference type="GO" id="GO:0045542">
    <property type="term" value="P:positive regulation of cholesterol biosynthetic process"/>
    <property type="evidence" value="ECO:0007669"/>
    <property type="project" value="Ensembl"/>
</dbReference>
<dbReference type="GO" id="GO:0045722">
    <property type="term" value="P:positive regulation of gluconeogenesis"/>
    <property type="evidence" value="ECO:0007669"/>
    <property type="project" value="Ensembl"/>
</dbReference>
<dbReference type="GO" id="GO:0032024">
    <property type="term" value="P:positive regulation of insulin secretion"/>
    <property type="evidence" value="ECO:0007669"/>
    <property type="project" value="Ensembl"/>
</dbReference>
<dbReference type="GO" id="GO:0050766">
    <property type="term" value="P:positive regulation of phagocytosis"/>
    <property type="evidence" value="ECO:0007669"/>
    <property type="project" value="Ensembl"/>
</dbReference>
<dbReference type="GO" id="GO:0046827">
    <property type="term" value="P:positive regulation of protein export from nucleus"/>
    <property type="evidence" value="ECO:0007669"/>
    <property type="project" value="Ensembl"/>
</dbReference>
<dbReference type="GO" id="GO:0099170">
    <property type="term" value="P:postsynaptic modulation of chemical synaptic transmission"/>
    <property type="evidence" value="ECO:0007669"/>
    <property type="project" value="Ensembl"/>
</dbReference>
<dbReference type="GO" id="GO:0006611">
    <property type="term" value="P:protein export from nucleus"/>
    <property type="evidence" value="ECO:0007669"/>
    <property type="project" value="Ensembl"/>
</dbReference>
<dbReference type="GO" id="GO:1990044">
    <property type="term" value="P:protein localization to lipid droplet"/>
    <property type="evidence" value="ECO:0007669"/>
    <property type="project" value="Ensembl"/>
</dbReference>
<dbReference type="GO" id="GO:2000810">
    <property type="term" value="P:regulation of bicellular tight junction assembly"/>
    <property type="evidence" value="ECO:0007669"/>
    <property type="project" value="Ensembl"/>
</dbReference>
<dbReference type="GO" id="GO:0051726">
    <property type="term" value="P:regulation of cell cycle"/>
    <property type="evidence" value="ECO:0007669"/>
    <property type="project" value="Ensembl"/>
</dbReference>
<dbReference type="GO" id="GO:0045667">
    <property type="term" value="P:regulation of osteoblast differentiation"/>
    <property type="evidence" value="ECO:0007669"/>
    <property type="project" value="Ensembl"/>
</dbReference>
<dbReference type="GO" id="GO:0061136">
    <property type="term" value="P:regulation of proteasomal protein catabolic process"/>
    <property type="evidence" value="ECO:0007669"/>
    <property type="project" value="Ensembl"/>
</dbReference>
<dbReference type="GO" id="GO:0070613">
    <property type="term" value="P:regulation of protein processing"/>
    <property type="evidence" value="ECO:0007669"/>
    <property type="project" value="Ensembl"/>
</dbReference>
<dbReference type="GO" id="GO:0048240">
    <property type="term" value="P:sperm capacitation"/>
    <property type="evidence" value="ECO:0007669"/>
    <property type="project" value="Ensembl"/>
</dbReference>
<dbReference type="CDD" id="cd14209">
    <property type="entry name" value="STKc_PKA"/>
    <property type="match status" value="1"/>
</dbReference>
<dbReference type="FunFam" id="3.30.200.20:FF:000005">
    <property type="entry name" value="cAMP-dependent protein kinase catalytic subunit"/>
    <property type="match status" value="1"/>
</dbReference>
<dbReference type="FunFam" id="1.10.510.10:FF:000005">
    <property type="entry name" value="cAMP-dependent protein kinase catalytic subunit alpha"/>
    <property type="match status" value="1"/>
</dbReference>
<dbReference type="Gene3D" id="3.30.200.20">
    <property type="entry name" value="Phosphorylase Kinase, domain 1"/>
    <property type="match status" value="1"/>
</dbReference>
<dbReference type="Gene3D" id="1.10.510.10">
    <property type="entry name" value="Transferase(Phosphotransferase) domain 1"/>
    <property type="match status" value="1"/>
</dbReference>
<dbReference type="InterPro" id="IPR000961">
    <property type="entry name" value="AGC-kinase_C"/>
</dbReference>
<dbReference type="InterPro" id="IPR011009">
    <property type="entry name" value="Kinase-like_dom_sf"/>
</dbReference>
<dbReference type="InterPro" id="IPR000719">
    <property type="entry name" value="Prot_kinase_dom"/>
</dbReference>
<dbReference type="InterPro" id="IPR017441">
    <property type="entry name" value="Protein_kinase_ATP_BS"/>
</dbReference>
<dbReference type="InterPro" id="IPR008271">
    <property type="entry name" value="Ser/Thr_kinase_AS"/>
</dbReference>
<dbReference type="InterPro" id="IPR044109">
    <property type="entry name" value="STKc_PKA"/>
</dbReference>
<dbReference type="PANTHER" id="PTHR24353:SF82">
    <property type="entry name" value="CAMP-DEPENDENT PROTEIN KINASE CATALYTIC SUBUNIT ALPHA"/>
    <property type="match status" value="1"/>
</dbReference>
<dbReference type="PANTHER" id="PTHR24353">
    <property type="entry name" value="CYCLIC NUCLEOTIDE-DEPENDENT PROTEIN KINASE"/>
    <property type="match status" value="1"/>
</dbReference>
<dbReference type="Pfam" id="PF00069">
    <property type="entry name" value="Pkinase"/>
    <property type="match status" value="1"/>
</dbReference>
<dbReference type="SMART" id="SM00133">
    <property type="entry name" value="S_TK_X"/>
    <property type="match status" value="1"/>
</dbReference>
<dbReference type="SMART" id="SM00220">
    <property type="entry name" value="S_TKc"/>
    <property type="match status" value="1"/>
</dbReference>
<dbReference type="SUPFAM" id="SSF56112">
    <property type="entry name" value="Protein kinase-like (PK-like)"/>
    <property type="match status" value="1"/>
</dbReference>
<dbReference type="PROSITE" id="PS51285">
    <property type="entry name" value="AGC_KINASE_CTER"/>
    <property type="match status" value="1"/>
</dbReference>
<dbReference type="PROSITE" id="PS00107">
    <property type="entry name" value="PROTEIN_KINASE_ATP"/>
    <property type="match status" value="1"/>
</dbReference>
<dbReference type="PROSITE" id="PS50011">
    <property type="entry name" value="PROTEIN_KINASE_DOM"/>
    <property type="match status" value="1"/>
</dbReference>
<dbReference type="PROSITE" id="PS00108">
    <property type="entry name" value="PROTEIN_KINASE_ST"/>
    <property type="match status" value="1"/>
</dbReference>
<gene>
    <name type="primary">PRKACA</name>
</gene>
<evidence type="ECO:0000250" key="1">
    <source>
        <dbReference type="UniProtKB" id="P00517"/>
    </source>
</evidence>
<evidence type="ECO:0000250" key="2">
    <source>
        <dbReference type="UniProtKB" id="P05132"/>
    </source>
</evidence>
<evidence type="ECO:0000250" key="3">
    <source>
        <dbReference type="UniProtKB" id="P17612"/>
    </source>
</evidence>
<evidence type="ECO:0000250" key="4">
    <source>
        <dbReference type="UniProtKB" id="P27791"/>
    </source>
</evidence>
<evidence type="ECO:0000255" key="5">
    <source>
        <dbReference type="PROSITE-ProRule" id="PRU00159"/>
    </source>
</evidence>
<evidence type="ECO:0000255" key="6">
    <source>
        <dbReference type="PROSITE-ProRule" id="PRU00618"/>
    </source>
</evidence>
<evidence type="ECO:0000255" key="7">
    <source>
        <dbReference type="PROSITE-ProRule" id="PRU10027"/>
    </source>
</evidence>
<evidence type="ECO:0000305" key="8"/>
<evidence type="ECO:0007829" key="9">
    <source>
        <dbReference type="PDB" id="5LCQ"/>
    </source>
</evidence>
<evidence type="ECO:0007829" key="10">
    <source>
        <dbReference type="PDB" id="5M0U"/>
    </source>
</evidence>
<evidence type="ECO:0007829" key="11">
    <source>
        <dbReference type="PDB" id="5N1F"/>
    </source>
</evidence>
<evidence type="ECO:0007829" key="12">
    <source>
        <dbReference type="PDB" id="5OUS"/>
    </source>
</evidence>
<sequence>MGNAAAAKKGSEQESVKEFLAKAKEEFLKKWESPSQNTAQLDHFDRIKTLGTGSFGRVMLVKHKETGNHYAMKILDKQKVVKLKQIEHTLNEKRILQAVNFPFLVKLEFSFKDNSNLYMVMEYVPGGEMFSHLRRIGRFSEPHARFYAAQIVLTFEYLHSLDLIYRDLKPENLLIDQQGYIQVTDFGFAKRVKGRTWTLCGTPEYLAPEIILSKGYNKAVDWWALGVLIYEMAAGYPPFFADQPIQIYEKIVSGKVRFPSHFSSDLKDLLRNLLQVDLTKRFGNLKNGVNDIKNHKWFATTDWIAIYQRKVEAPFIPKFKGPGDTSNFDDYEEEEIRVSINEKCGKEFTEF</sequence>
<reference key="1">
    <citation type="journal article" date="1991" name="J. Biol. Chem.">
        <title>Decreased catalytic subunit mRNA levels and altered catalytic subunit mRNA structure in a cAMP-resistant Chinese hamster ovary cell line.</title>
        <authorList>
            <person name="Howard P."/>
            <person name="Day K.H."/>
            <person name="Kim K.E."/>
            <person name="Richardson J."/>
            <person name="Thomas J."/>
            <person name="Abraham I."/>
            <person name="Fleischmann R.D."/>
            <person name="Gottesman M.M."/>
            <person name="Maurer R.A."/>
        </authorList>
    </citation>
    <scope>NUCLEOTIDE SEQUENCE [MRNA]</scope>
</reference>
<name>KAPCA_CRIGR</name>
<accession>P25321</accession>
<comment type="function">
    <text evidence="2 3 4">Phosphorylates a large number of substrates in the cytoplasm and the nucleus (By similarity). Phosphorylates CDC25B, ABL1, NFKB1, CLDN3, PSMC5/RPT6, PJA2, RYR2, RORA, SOX9 and VASP (By similarity). Regulates the abundance of compartmentalized pools of its regulatory subunits through phosphorylation of PJA2 which binds and ubiquitinates these subunits, leading to their subsequent proteolysis. RORA is activated by phosphorylation. Required for glucose-mediated adipogenic differentiation increase and osteogenic differentiation inhibition from osteoblasts (By similarity). Involved in chondrogenesis by mediating phosphorylation of SOX9 (By similarity). Involved in the regulation of platelets in response to thrombin and collagen; maintains circulating platelets in a resting state by phosphorylating proteins in numerous platelet inhibitory pathways when in complex with NF-kappa-B (NFKB1 and NFKB2) and I-kappa-B-alpha (NFKBIA), but thrombin and collagen disrupt these complexes and free active PRKACA stimulates platelets and leads to platelet aggregation by phosphorylating VASP. RYR2 channel activity is potentiated by phosphorylation in presence of luminal Ca(2+), leading to reduced amplitude and increased frequency of store overload-induced Ca(2+) release (SOICR) characterized by an increased rate of Ca(2+) release and propagation velocity of spontaneous Ca(2+) waves, despite reduced wave amplitude and resting cytosolic Ca(2+). PSMC5/RPT6 activation by phosphorylation stimulates proteasome. Negatively regulates tight junctions (TJs) in ovarian cancer cells via CLDN3 phosphorylation. NFKB1 phosphorylation promotes NF-kappa-B p50-p50 DNA binding. Required for phosphorylation of GLI transcription factors which inhibits them and prevents transcriptional activation of Hedgehog signaling pathway target genes (By similarity). GLI transcription factor phosphorylation is inhibited by interaction of PRKACA with SMO which sequesters PRKACA at the cell membrane (By similarity). Involved in embryonic development by down-regulating the Hedgehog (Hh) signaling pathway that determines embryo pattern formation and morphogenesis most probably through the regulation of OFD1 in ciliogenesis (By similarity). Prevents meiosis resumption in prophase-arrested oocytes via CDC25B inactivation by phosphorylation (By similarity). May also regulate rapid eye movement (REM) sleep in the pedunculopontine tegmental (PPT) (By similarity). Phosphorylates APOBEC3G and AICDA. Phosphorylates HSF1; this phosphorylation promotes HSF1 nuclear localization and transcriptional activity upon heat shock (By similarity). Acts as a negative regulator of mTORC1 by mediating phosphorylation of RPTOR (By similarity).</text>
</comment>
<comment type="catalytic activity">
    <reaction>
        <text>L-seryl-[protein] + ATP = O-phospho-L-seryl-[protein] + ADP + H(+)</text>
        <dbReference type="Rhea" id="RHEA:17989"/>
        <dbReference type="Rhea" id="RHEA-COMP:9863"/>
        <dbReference type="Rhea" id="RHEA-COMP:11604"/>
        <dbReference type="ChEBI" id="CHEBI:15378"/>
        <dbReference type="ChEBI" id="CHEBI:29999"/>
        <dbReference type="ChEBI" id="CHEBI:30616"/>
        <dbReference type="ChEBI" id="CHEBI:83421"/>
        <dbReference type="ChEBI" id="CHEBI:456216"/>
        <dbReference type="EC" id="2.7.11.11"/>
    </reaction>
</comment>
<comment type="catalytic activity">
    <reaction>
        <text>L-threonyl-[protein] + ATP = O-phospho-L-threonyl-[protein] + ADP + H(+)</text>
        <dbReference type="Rhea" id="RHEA:46608"/>
        <dbReference type="Rhea" id="RHEA-COMP:11060"/>
        <dbReference type="Rhea" id="RHEA-COMP:11605"/>
        <dbReference type="ChEBI" id="CHEBI:15378"/>
        <dbReference type="ChEBI" id="CHEBI:30013"/>
        <dbReference type="ChEBI" id="CHEBI:30616"/>
        <dbReference type="ChEBI" id="CHEBI:61977"/>
        <dbReference type="ChEBI" id="CHEBI:456216"/>
        <dbReference type="EC" id="2.7.11.11"/>
    </reaction>
</comment>
<comment type="activity regulation">
    <text>Allosterically activated by various compounds, including ATP. Activated by cAMP; the nucleotide acts as a dynamic and allosteric activator by coupling the two lobes of apo PKA, enhancing the enzyme dynamics synchronously and priming it for catalysis.</text>
</comment>
<comment type="subunit">
    <text evidence="2 3">A number of inactive tetrameric holoenzymes are produced by the combination of homo- or heterodimers of the different regulatory subunits associated with two catalytic subunits. cAMP causes the dissociation of the inactive holoenzyme into a dimer of regulatory subunits bound to four cAMP and two free monomeric catalytic subunits. Activates cAMP-sensitive PKAI and PKAII holoenzymes by interacting with regulatory subunit (R) of PKA, PRKAR1A/PKR1 and PRKAR2A/PKR2, respectively. Interacts with NFKB1, NFKB2 and NFKBIA in platelets; these interactions are disrupted by thrombin and collagen. Binds to ABL1 in spermatozoa and with CDC25B in oocytes (By similarity). Interacts with APOBEC3G and AICDA (By similarity). Interacts with RAB13; downstream effector of RAB13 involved in tight junction assembly (By similarity). Found in a complex at least composed of MROH2B, PRKACA and TCP11 (By similarity). Interacts with MROH2B (By similarity). Interacts with HSF1 (By similarity). Interacts with TCP11 (By similarity). Interacts with TBC1D31; in the regulation of OFD1 (By similarity). Interacts in free form with SMO (via C-terminus); the interaction leads to sequestration of PRKACA at the membrane, preventing PRKACA-mediated phosphorylation of GLI transcription factors (By similarity).</text>
</comment>
<comment type="subcellular location">
    <subcellularLocation>
        <location evidence="3">Cytoplasm</location>
    </subcellularLocation>
    <subcellularLocation>
        <location evidence="3">Cell membrane</location>
    </subcellularLocation>
    <subcellularLocation>
        <location evidence="3">Membrane</location>
        <topology evidence="3">Lipid-anchor</topology>
    </subcellularLocation>
    <subcellularLocation>
        <location evidence="3">Nucleus</location>
    </subcellularLocation>
    <subcellularLocation>
        <location evidence="2">Mitochondrion</location>
    </subcellularLocation>
    <text evidence="2 3">Translocates into the nucleus (monomeric catalytic subunit). The inactive holoenzyme is found in the cytoplasm. Distributed throughout the cytoplasm in meiotically incompetent oocytes. Associated to mitochondrion as meiotic competence is acquired. Aggregates around the germinal vesicles (GV) at the immature GV stage oocytes (By similarity). Colocalizes with HSF1 in nuclear stress bodies (nSBs) upon heat shock (By similarity). Recruited to the cell membrane through interaction with SMO (By similarity).</text>
</comment>
<comment type="tissue specificity">
    <text>Ubiquitously expressed in mammalian tissues.</text>
</comment>
<comment type="PTM">
    <text evidence="2 3">Autophosphorylated. Phosphorylation is enhanced by vitamin K(2). Phosphorylated on threonine and serine residues. Phosphorylation on Thr-198 is required for full activity (By similarity). Phosphorylated at Tyr-331 by activated receptor tyrosine kinases EGFR and PDGFR; this increases catalytic efficiency (By similarity).</text>
</comment>
<comment type="PTM">
    <text evidence="2">Asn-3 is partially deaminated to Asp-3 giving rise to 2 major isoelectric variants, called CB and CA respectively.</text>
</comment>
<comment type="PTM">
    <text evidence="2">When myristoylated, Ser-11 is autophosphorylated probably in conjunction with deamidation of Asn-3.</text>
</comment>
<comment type="similarity">
    <text evidence="8">Belongs to the protein kinase superfamily. AGC Ser/Thr protein kinase family. cAMP subfamily.</text>
</comment>
<organism>
    <name type="scientific">Cricetulus griseus</name>
    <name type="common">Chinese hamster</name>
    <name type="synonym">Cricetulus barabensis griseus</name>
    <dbReference type="NCBI Taxonomy" id="10029"/>
    <lineage>
        <taxon>Eukaryota</taxon>
        <taxon>Metazoa</taxon>
        <taxon>Chordata</taxon>
        <taxon>Craniata</taxon>
        <taxon>Vertebrata</taxon>
        <taxon>Euteleostomi</taxon>
        <taxon>Mammalia</taxon>
        <taxon>Eutheria</taxon>
        <taxon>Euarchontoglires</taxon>
        <taxon>Glires</taxon>
        <taxon>Rodentia</taxon>
        <taxon>Myomorpha</taxon>
        <taxon>Muroidea</taxon>
        <taxon>Cricetidae</taxon>
        <taxon>Cricetinae</taxon>
        <taxon>Cricetulus</taxon>
    </lineage>
</organism>
<protein>
    <recommendedName>
        <fullName>cAMP-dependent protein kinase catalytic subunit alpha</fullName>
        <shortName>PKA C-alpha</shortName>
        <ecNumber>2.7.11.11</ecNumber>
    </recommendedName>
</protein>